<comment type="function">
    <text evidence="1">Functions in the biosynthesis of branched-chain amino acids. Catalyzes the dehydration of (2R,3R)-2,3-dihydroxy-3-methylpentanoate (2,3-dihydroxy-3-methylvalerate) into 2-oxo-3-methylpentanoate (2-oxo-3-methylvalerate) and of (2R)-2,3-dihydroxy-3-methylbutanoate (2,3-dihydroxyisovalerate) into 2-oxo-3-methylbutanoate (2-oxoisovalerate), the penultimate precursor to L-isoleucine and L-valine, respectively.</text>
</comment>
<comment type="catalytic activity">
    <reaction evidence="1">
        <text>(2R)-2,3-dihydroxy-3-methylbutanoate = 3-methyl-2-oxobutanoate + H2O</text>
        <dbReference type="Rhea" id="RHEA:24809"/>
        <dbReference type="ChEBI" id="CHEBI:11851"/>
        <dbReference type="ChEBI" id="CHEBI:15377"/>
        <dbReference type="ChEBI" id="CHEBI:49072"/>
        <dbReference type="EC" id="4.2.1.9"/>
    </reaction>
    <physiologicalReaction direction="left-to-right" evidence="1">
        <dbReference type="Rhea" id="RHEA:24810"/>
    </physiologicalReaction>
</comment>
<comment type="catalytic activity">
    <reaction evidence="1">
        <text>(2R,3R)-2,3-dihydroxy-3-methylpentanoate = (S)-3-methyl-2-oxopentanoate + H2O</text>
        <dbReference type="Rhea" id="RHEA:27694"/>
        <dbReference type="ChEBI" id="CHEBI:15377"/>
        <dbReference type="ChEBI" id="CHEBI:35146"/>
        <dbReference type="ChEBI" id="CHEBI:49258"/>
        <dbReference type="EC" id="4.2.1.9"/>
    </reaction>
    <physiologicalReaction direction="left-to-right" evidence="1">
        <dbReference type="Rhea" id="RHEA:27695"/>
    </physiologicalReaction>
</comment>
<comment type="cofactor">
    <cofactor evidence="1">
        <name>[2Fe-2S] cluster</name>
        <dbReference type="ChEBI" id="CHEBI:190135"/>
    </cofactor>
    <text evidence="1">Binds 1 [2Fe-2S] cluster per subunit. This cluster acts as a Lewis acid cofactor.</text>
</comment>
<comment type="cofactor">
    <cofactor evidence="1">
        <name>Mg(2+)</name>
        <dbReference type="ChEBI" id="CHEBI:18420"/>
    </cofactor>
</comment>
<comment type="pathway">
    <text evidence="1">Amino-acid biosynthesis; L-isoleucine biosynthesis; L-isoleucine from 2-oxobutanoate: step 3/4.</text>
</comment>
<comment type="pathway">
    <text evidence="1">Amino-acid biosynthesis; L-valine biosynthesis; L-valine from pyruvate: step 3/4.</text>
</comment>
<comment type="subunit">
    <text evidence="1">Homodimer.</text>
</comment>
<comment type="similarity">
    <text evidence="1">Belongs to the IlvD/Edd family.</text>
</comment>
<name>ILVD_BACAA</name>
<accession>C3P6S2</accession>
<sequence length="557" mass="59934">MRSDMIKKGFDKAPHRSLLKATGLKDEDFDKPFIAICNSFIEIIPGHKHLNEFGKLVKEAVRAAGMVPFEFNTIGVDDGIAMGHIGMRYSLPSREIIADSVETVVNAHWFDGMICIPNCDKITPGMMMAALRINIPTVFVSGGPMAAGKTSKGDVVDLSSVFEGVGAYQSGKISEEELKDIEDHGCPSCGSCSGMFTANSMNCLCEVLGLALPGNGSILAIDPRREELIKQAAEKLKILIERDIKPRDIVTEEAIDDAFALDMAMGGSTNTVLHTLALAQEAGLDYDMNRIDAVSRRVPHLCKVSPASNWHMEDIDRAGGISAILKEMSRKEGVLHLDRITATGQTLRENIAHAEIKDKEVIHSLENPHSEEGGLRILKGNLAKDGAVIKSGATEVKRFEGPCVIFNSQDEALAGIMLGKVKKGDVVVIRYEGPRGGPGMPEMLAPTSAIAGMGLGADVALLTDGRFSGASRGISVGHISPEAAAGGTIALLEQGDIVCIDVEERLLEVRVSDEELGKRKKEWKRPEPKVKTGWLGRYAQMVTSANTGAVLKIPNFD</sequence>
<protein>
    <recommendedName>
        <fullName evidence="1">Dihydroxy-acid dehydratase</fullName>
        <shortName evidence="1">DAD</shortName>
        <ecNumber evidence="1">4.2.1.9</ecNumber>
    </recommendedName>
</protein>
<evidence type="ECO:0000255" key="1">
    <source>
        <dbReference type="HAMAP-Rule" id="MF_00012"/>
    </source>
</evidence>
<reference key="1">
    <citation type="submission" date="2009-04" db="EMBL/GenBank/DDBJ databases">
        <title>Genome sequence of Bacillus anthracis A0248.</title>
        <authorList>
            <person name="Dodson R.J."/>
            <person name="Munk A.C."/>
            <person name="Bruce D."/>
            <person name="Detter C."/>
            <person name="Tapia R."/>
            <person name="Sutton G."/>
            <person name="Sims D."/>
            <person name="Brettin T."/>
        </authorList>
    </citation>
    <scope>NUCLEOTIDE SEQUENCE [LARGE SCALE GENOMIC DNA]</scope>
    <source>
        <strain>A0248</strain>
    </source>
</reference>
<feature type="chain" id="PRO_1000116497" description="Dihydroxy-acid dehydratase">
    <location>
        <begin position="1"/>
        <end position="557"/>
    </location>
</feature>
<feature type="active site" description="Proton acceptor" evidence="1">
    <location>
        <position position="468"/>
    </location>
</feature>
<feature type="binding site" evidence="1">
    <location>
        <position position="78"/>
    </location>
    <ligand>
        <name>Mg(2+)</name>
        <dbReference type="ChEBI" id="CHEBI:18420"/>
    </ligand>
</feature>
<feature type="binding site" evidence="1">
    <location>
        <position position="119"/>
    </location>
    <ligand>
        <name>[2Fe-2S] cluster</name>
        <dbReference type="ChEBI" id="CHEBI:190135"/>
    </ligand>
</feature>
<feature type="binding site" evidence="1">
    <location>
        <position position="120"/>
    </location>
    <ligand>
        <name>Mg(2+)</name>
        <dbReference type="ChEBI" id="CHEBI:18420"/>
    </ligand>
</feature>
<feature type="binding site" description="via carbamate group" evidence="1">
    <location>
        <position position="121"/>
    </location>
    <ligand>
        <name>Mg(2+)</name>
        <dbReference type="ChEBI" id="CHEBI:18420"/>
    </ligand>
</feature>
<feature type="binding site" evidence="1">
    <location>
        <position position="192"/>
    </location>
    <ligand>
        <name>[2Fe-2S] cluster</name>
        <dbReference type="ChEBI" id="CHEBI:190135"/>
    </ligand>
</feature>
<feature type="binding site" evidence="1">
    <location>
        <position position="442"/>
    </location>
    <ligand>
        <name>Mg(2+)</name>
        <dbReference type="ChEBI" id="CHEBI:18420"/>
    </ligand>
</feature>
<feature type="modified residue" description="N6-carboxylysine" evidence="1">
    <location>
        <position position="121"/>
    </location>
</feature>
<proteinExistence type="inferred from homology"/>
<organism>
    <name type="scientific">Bacillus anthracis (strain A0248)</name>
    <dbReference type="NCBI Taxonomy" id="592021"/>
    <lineage>
        <taxon>Bacteria</taxon>
        <taxon>Bacillati</taxon>
        <taxon>Bacillota</taxon>
        <taxon>Bacilli</taxon>
        <taxon>Bacillales</taxon>
        <taxon>Bacillaceae</taxon>
        <taxon>Bacillus</taxon>
        <taxon>Bacillus cereus group</taxon>
    </lineage>
</organism>
<dbReference type="EC" id="4.2.1.9" evidence="1"/>
<dbReference type="EMBL" id="CP001598">
    <property type="protein sequence ID" value="ACQ48258.1"/>
    <property type="molecule type" value="Genomic_DNA"/>
</dbReference>
<dbReference type="RefSeq" id="WP_001255799.1">
    <property type="nucleotide sequence ID" value="NC_012659.1"/>
</dbReference>
<dbReference type="SMR" id="C3P6S2"/>
<dbReference type="GeneID" id="45021788"/>
<dbReference type="KEGG" id="bai:BAA_1922"/>
<dbReference type="HOGENOM" id="CLU_014271_4_2_9"/>
<dbReference type="UniPathway" id="UPA00047">
    <property type="reaction ID" value="UER00057"/>
</dbReference>
<dbReference type="UniPathway" id="UPA00049">
    <property type="reaction ID" value="UER00061"/>
</dbReference>
<dbReference type="GO" id="GO:0005829">
    <property type="term" value="C:cytosol"/>
    <property type="evidence" value="ECO:0007669"/>
    <property type="project" value="TreeGrafter"/>
</dbReference>
<dbReference type="GO" id="GO:0051537">
    <property type="term" value="F:2 iron, 2 sulfur cluster binding"/>
    <property type="evidence" value="ECO:0007669"/>
    <property type="project" value="UniProtKB-UniRule"/>
</dbReference>
<dbReference type="GO" id="GO:0004160">
    <property type="term" value="F:dihydroxy-acid dehydratase activity"/>
    <property type="evidence" value="ECO:0007669"/>
    <property type="project" value="UniProtKB-UniRule"/>
</dbReference>
<dbReference type="GO" id="GO:0000287">
    <property type="term" value="F:magnesium ion binding"/>
    <property type="evidence" value="ECO:0007669"/>
    <property type="project" value="UniProtKB-UniRule"/>
</dbReference>
<dbReference type="GO" id="GO:0009097">
    <property type="term" value="P:isoleucine biosynthetic process"/>
    <property type="evidence" value="ECO:0007669"/>
    <property type="project" value="UniProtKB-UniRule"/>
</dbReference>
<dbReference type="GO" id="GO:0009099">
    <property type="term" value="P:L-valine biosynthetic process"/>
    <property type="evidence" value="ECO:0007669"/>
    <property type="project" value="UniProtKB-UniRule"/>
</dbReference>
<dbReference type="FunFam" id="3.50.30.80:FF:000001">
    <property type="entry name" value="Dihydroxy-acid dehydratase"/>
    <property type="match status" value="1"/>
</dbReference>
<dbReference type="Gene3D" id="3.50.30.80">
    <property type="entry name" value="IlvD/EDD C-terminal domain-like"/>
    <property type="match status" value="1"/>
</dbReference>
<dbReference type="HAMAP" id="MF_00012">
    <property type="entry name" value="IlvD"/>
    <property type="match status" value="1"/>
</dbReference>
<dbReference type="InterPro" id="IPR042096">
    <property type="entry name" value="Dihydro-acid_dehy_C"/>
</dbReference>
<dbReference type="InterPro" id="IPR004404">
    <property type="entry name" value="DihydroxyA_deHydtase"/>
</dbReference>
<dbReference type="InterPro" id="IPR020558">
    <property type="entry name" value="DiOHA_6PGluconate_deHydtase_CS"/>
</dbReference>
<dbReference type="InterPro" id="IPR056740">
    <property type="entry name" value="ILV_EDD_C"/>
</dbReference>
<dbReference type="InterPro" id="IPR000581">
    <property type="entry name" value="ILV_EDD_N"/>
</dbReference>
<dbReference type="InterPro" id="IPR037237">
    <property type="entry name" value="IlvD/EDD_N"/>
</dbReference>
<dbReference type="NCBIfam" id="TIGR00110">
    <property type="entry name" value="ilvD"/>
    <property type="match status" value="1"/>
</dbReference>
<dbReference type="NCBIfam" id="NF002068">
    <property type="entry name" value="PRK00911.1"/>
    <property type="match status" value="1"/>
</dbReference>
<dbReference type="PANTHER" id="PTHR43661">
    <property type="entry name" value="D-XYLONATE DEHYDRATASE"/>
    <property type="match status" value="1"/>
</dbReference>
<dbReference type="PANTHER" id="PTHR43661:SF3">
    <property type="entry name" value="D-XYLONATE DEHYDRATASE YAGF-RELATED"/>
    <property type="match status" value="1"/>
</dbReference>
<dbReference type="Pfam" id="PF24877">
    <property type="entry name" value="ILV_EDD_C"/>
    <property type="match status" value="1"/>
</dbReference>
<dbReference type="Pfam" id="PF00920">
    <property type="entry name" value="ILVD_EDD_N"/>
    <property type="match status" value="1"/>
</dbReference>
<dbReference type="SUPFAM" id="SSF143975">
    <property type="entry name" value="IlvD/EDD N-terminal domain-like"/>
    <property type="match status" value="1"/>
</dbReference>
<dbReference type="SUPFAM" id="SSF52016">
    <property type="entry name" value="LeuD/IlvD-like"/>
    <property type="match status" value="1"/>
</dbReference>
<dbReference type="PROSITE" id="PS00886">
    <property type="entry name" value="ILVD_EDD_1"/>
    <property type="match status" value="1"/>
</dbReference>
<dbReference type="PROSITE" id="PS00887">
    <property type="entry name" value="ILVD_EDD_2"/>
    <property type="match status" value="1"/>
</dbReference>
<gene>
    <name evidence="1" type="primary">ilvD</name>
    <name type="ordered locus">BAA_1922</name>
</gene>
<keyword id="KW-0001">2Fe-2S</keyword>
<keyword id="KW-0028">Amino-acid biosynthesis</keyword>
<keyword id="KW-0100">Branched-chain amino acid biosynthesis</keyword>
<keyword id="KW-0408">Iron</keyword>
<keyword id="KW-0411">Iron-sulfur</keyword>
<keyword id="KW-0456">Lyase</keyword>
<keyword id="KW-0460">Magnesium</keyword>
<keyword id="KW-0479">Metal-binding</keyword>